<proteinExistence type="evidence at protein level"/>
<dbReference type="EC" id="1.5.99.12"/>
<dbReference type="STRING" id="4565.P58763"/>
<dbReference type="Proteomes" id="UP000019116">
    <property type="component" value="Unplaced"/>
</dbReference>
<dbReference type="GO" id="GO:0016020">
    <property type="term" value="C:membrane"/>
    <property type="evidence" value="ECO:0007669"/>
    <property type="project" value="UniProtKB-SubCell"/>
</dbReference>
<dbReference type="GO" id="GO:0019139">
    <property type="term" value="F:cytokinin dehydrogenase activity"/>
    <property type="evidence" value="ECO:0007669"/>
    <property type="project" value="UniProtKB-EC"/>
</dbReference>
<name>CKX_WHEAT</name>
<sequence>FLPKSLFTLVTDKSL</sequence>
<keyword id="KW-0903">Direct protein sequencing</keyword>
<keyword id="KW-0274">FAD</keyword>
<keyword id="KW-0285">Flavoprotein</keyword>
<keyword id="KW-0472">Membrane</keyword>
<keyword id="KW-0560">Oxidoreductase</keyword>
<keyword id="KW-1185">Reference proteome</keyword>
<reference key="1">
    <citation type="journal article" date="2001" name="Eur. J. Biochem.">
        <title>Cytokinin oxidase or dehydrogenase? Mechanism of cytokinin degradation in cereals.</title>
        <authorList>
            <person name="Galuszka P."/>
            <person name="Frebort I."/>
            <person name="Sebela M."/>
            <person name="Sauer P."/>
            <person name="Jacobsen S."/>
            <person name="Pec P."/>
        </authorList>
    </citation>
    <scope>PROTEIN SEQUENCE</scope>
    <scope>CHARACTERIZATION</scope>
    <source>
        <strain>cv. Samantha</strain>
    </source>
</reference>
<feature type="chain" id="PRO_0000089839" description="Cytokinin dehydrogenase">
    <location>
        <begin position="1"/>
        <end position="15" status="greater than"/>
    </location>
</feature>
<feature type="unsure residue">
    <location>
        <position position="1"/>
    </location>
</feature>
<feature type="unsure residue">
    <location>
        <begin position="13"/>
        <end position="15"/>
    </location>
</feature>
<feature type="non-terminal residue">
    <location>
        <position position="15"/>
    </location>
</feature>
<comment type="function">
    <text>Catalyzes the oxidation of cytokinins, a family of N(6)-substituted adenine derivatives that are plant hormones, where the substituent is an isopentenyl group. Substrate preference is 2-(2-hydroxyethylamino)-9-methyl-N(6)-isopentenyladenine &gt;&gt; isopentenyladenine &gt; cis-zeatin = isopentenyladenosine = zeatin &gt;&gt; zeatin riboside.</text>
</comment>
<comment type="catalytic activity">
    <reaction>
        <text>N(6)-dimethylallyladenine + A + H2O = 3-methyl-2-butenal + adenine + AH2</text>
        <dbReference type="Rhea" id="RHEA:13625"/>
        <dbReference type="ChEBI" id="CHEBI:13193"/>
        <dbReference type="ChEBI" id="CHEBI:15377"/>
        <dbReference type="ChEBI" id="CHEBI:15825"/>
        <dbReference type="ChEBI" id="CHEBI:16708"/>
        <dbReference type="ChEBI" id="CHEBI:17499"/>
        <dbReference type="ChEBI" id="CHEBI:17660"/>
        <dbReference type="EC" id="1.5.99.12"/>
    </reaction>
</comment>
<comment type="cofactor">
    <cofactor>
        <name>FAD</name>
        <dbReference type="ChEBI" id="CHEBI:57692"/>
    </cofactor>
</comment>
<comment type="biophysicochemical properties">
    <phDependence>
        <text>Optimum pH is 6.5.</text>
    </phDependence>
</comment>
<comment type="subunit">
    <text>Monomer.</text>
</comment>
<comment type="subcellular location">
    <subcellularLocation>
        <location>Membrane</location>
    </subcellularLocation>
    <text>Might be located on membranes.</text>
</comment>
<organism>
    <name type="scientific">Triticum aestivum</name>
    <name type="common">Wheat</name>
    <dbReference type="NCBI Taxonomy" id="4565"/>
    <lineage>
        <taxon>Eukaryota</taxon>
        <taxon>Viridiplantae</taxon>
        <taxon>Streptophyta</taxon>
        <taxon>Embryophyta</taxon>
        <taxon>Tracheophyta</taxon>
        <taxon>Spermatophyta</taxon>
        <taxon>Magnoliopsida</taxon>
        <taxon>Liliopsida</taxon>
        <taxon>Poales</taxon>
        <taxon>Poaceae</taxon>
        <taxon>BOP clade</taxon>
        <taxon>Pooideae</taxon>
        <taxon>Triticodae</taxon>
        <taxon>Triticeae</taxon>
        <taxon>Triticinae</taxon>
        <taxon>Triticum</taxon>
    </lineage>
</organism>
<accession>P58763</accession>
<protein>
    <recommendedName>
        <fullName>Cytokinin dehydrogenase</fullName>
        <ecNumber>1.5.99.12</ecNumber>
    </recommendedName>
    <alternativeName>
        <fullName>Cytokinin oxidase</fullName>
        <shortName>CKO</shortName>
        <shortName>CKX</shortName>
    </alternativeName>
</protein>